<name>RS21_STUS1</name>
<organism>
    <name type="scientific">Stutzerimonas stutzeri (strain A1501)</name>
    <name type="common">Pseudomonas stutzeri</name>
    <dbReference type="NCBI Taxonomy" id="379731"/>
    <lineage>
        <taxon>Bacteria</taxon>
        <taxon>Pseudomonadati</taxon>
        <taxon>Pseudomonadota</taxon>
        <taxon>Gammaproteobacteria</taxon>
        <taxon>Pseudomonadales</taxon>
        <taxon>Pseudomonadaceae</taxon>
        <taxon>Stutzerimonas</taxon>
    </lineage>
</organism>
<protein>
    <recommendedName>
        <fullName evidence="1">Small ribosomal subunit protein bS21</fullName>
    </recommendedName>
    <alternativeName>
        <fullName evidence="3">30S ribosomal protein S21</fullName>
    </alternativeName>
</protein>
<comment type="similarity">
    <text evidence="1">Belongs to the bacterial ribosomal protein bS21 family.</text>
</comment>
<gene>
    <name evidence="1" type="primary">rpsU</name>
    <name type="ordered locus">PST_0714</name>
</gene>
<accession>A4VHG8</accession>
<sequence length="71" mass="8386">MPAVKVKENEPFDVALRRFKRSCEKAGVLAEVRSREFYEKPTAERKRKAAAAVKRHAKKVQREQRRSVRLY</sequence>
<evidence type="ECO:0000255" key="1">
    <source>
        <dbReference type="HAMAP-Rule" id="MF_00358"/>
    </source>
</evidence>
<evidence type="ECO:0000256" key="2">
    <source>
        <dbReference type="SAM" id="MobiDB-lite"/>
    </source>
</evidence>
<evidence type="ECO:0000305" key="3"/>
<keyword id="KW-1185">Reference proteome</keyword>
<keyword id="KW-0687">Ribonucleoprotein</keyword>
<keyword id="KW-0689">Ribosomal protein</keyword>
<reference key="1">
    <citation type="journal article" date="2008" name="Proc. Natl. Acad. Sci. U.S.A.">
        <title>Nitrogen fixation island and rhizosphere competence traits in the genome of root-associated Pseudomonas stutzeri A1501.</title>
        <authorList>
            <person name="Yan Y."/>
            <person name="Yang J."/>
            <person name="Dou Y."/>
            <person name="Chen M."/>
            <person name="Ping S."/>
            <person name="Peng J."/>
            <person name="Lu W."/>
            <person name="Zhang W."/>
            <person name="Yao Z."/>
            <person name="Li H."/>
            <person name="Liu W."/>
            <person name="He S."/>
            <person name="Geng L."/>
            <person name="Zhang X."/>
            <person name="Yang F."/>
            <person name="Yu H."/>
            <person name="Zhan Y."/>
            <person name="Li D."/>
            <person name="Lin Z."/>
            <person name="Wang Y."/>
            <person name="Elmerich C."/>
            <person name="Lin M."/>
            <person name="Jin Q."/>
        </authorList>
    </citation>
    <scope>NUCLEOTIDE SEQUENCE [LARGE SCALE GENOMIC DNA]</scope>
    <source>
        <strain>A1501</strain>
    </source>
</reference>
<proteinExistence type="inferred from homology"/>
<dbReference type="EMBL" id="CP000304">
    <property type="protein sequence ID" value="ABP78419.1"/>
    <property type="molecule type" value="Genomic_DNA"/>
</dbReference>
<dbReference type="RefSeq" id="WP_003290642.1">
    <property type="nucleotide sequence ID" value="NC_009434.1"/>
</dbReference>
<dbReference type="SMR" id="A4VHG8"/>
<dbReference type="GeneID" id="83643655"/>
<dbReference type="KEGG" id="psa:PST_0714"/>
<dbReference type="eggNOG" id="COG0828">
    <property type="taxonomic scope" value="Bacteria"/>
</dbReference>
<dbReference type="HOGENOM" id="CLU_159258_1_0_6"/>
<dbReference type="Proteomes" id="UP000000233">
    <property type="component" value="Chromosome"/>
</dbReference>
<dbReference type="GO" id="GO:1990904">
    <property type="term" value="C:ribonucleoprotein complex"/>
    <property type="evidence" value="ECO:0007669"/>
    <property type="project" value="UniProtKB-KW"/>
</dbReference>
<dbReference type="GO" id="GO:0005840">
    <property type="term" value="C:ribosome"/>
    <property type="evidence" value="ECO:0007669"/>
    <property type="project" value="UniProtKB-KW"/>
</dbReference>
<dbReference type="GO" id="GO:0003735">
    <property type="term" value="F:structural constituent of ribosome"/>
    <property type="evidence" value="ECO:0007669"/>
    <property type="project" value="InterPro"/>
</dbReference>
<dbReference type="GO" id="GO:0006412">
    <property type="term" value="P:translation"/>
    <property type="evidence" value="ECO:0007669"/>
    <property type="project" value="UniProtKB-UniRule"/>
</dbReference>
<dbReference type="Gene3D" id="1.20.5.1150">
    <property type="entry name" value="Ribosomal protein S8"/>
    <property type="match status" value="1"/>
</dbReference>
<dbReference type="HAMAP" id="MF_00358">
    <property type="entry name" value="Ribosomal_bS21"/>
    <property type="match status" value="1"/>
</dbReference>
<dbReference type="InterPro" id="IPR001911">
    <property type="entry name" value="Ribosomal_bS21"/>
</dbReference>
<dbReference type="InterPro" id="IPR018278">
    <property type="entry name" value="Ribosomal_bS21_CS"/>
</dbReference>
<dbReference type="InterPro" id="IPR038380">
    <property type="entry name" value="Ribosomal_bS21_sf"/>
</dbReference>
<dbReference type="NCBIfam" id="TIGR00030">
    <property type="entry name" value="S21p"/>
    <property type="match status" value="1"/>
</dbReference>
<dbReference type="PANTHER" id="PTHR21109">
    <property type="entry name" value="MITOCHONDRIAL 28S RIBOSOMAL PROTEIN S21"/>
    <property type="match status" value="1"/>
</dbReference>
<dbReference type="PANTHER" id="PTHR21109:SF22">
    <property type="entry name" value="SMALL RIBOSOMAL SUBUNIT PROTEIN BS21"/>
    <property type="match status" value="1"/>
</dbReference>
<dbReference type="Pfam" id="PF01165">
    <property type="entry name" value="Ribosomal_S21"/>
    <property type="match status" value="1"/>
</dbReference>
<dbReference type="PRINTS" id="PR00976">
    <property type="entry name" value="RIBOSOMALS21"/>
</dbReference>
<dbReference type="PROSITE" id="PS01181">
    <property type="entry name" value="RIBOSOMAL_S21"/>
    <property type="match status" value="1"/>
</dbReference>
<feature type="chain" id="PRO_1000005159" description="Small ribosomal subunit protein bS21">
    <location>
        <begin position="1"/>
        <end position="71"/>
    </location>
</feature>
<feature type="region of interest" description="Disordered" evidence="2">
    <location>
        <begin position="49"/>
        <end position="71"/>
    </location>
</feature>
<feature type="compositionally biased region" description="Basic residues" evidence="2">
    <location>
        <begin position="49"/>
        <end position="59"/>
    </location>
</feature>
<feature type="compositionally biased region" description="Basic and acidic residues" evidence="2">
    <location>
        <begin position="60"/>
        <end position="71"/>
    </location>
</feature>